<reference key="1">
    <citation type="submission" date="2003-03" db="EMBL/GenBank/DDBJ databases">
        <title>African swine fever virus genomes.</title>
        <authorList>
            <person name="Kutish G.F."/>
            <person name="Rock D.L."/>
        </authorList>
    </citation>
    <scope>NUCLEOTIDE SEQUENCE [LARGE SCALE GENOMIC DNA]</scope>
</reference>
<proteinExistence type="inferred from homology"/>
<feature type="chain" id="PRO_0000373273" description="Protein MGF 360-10L">
    <location>
        <begin position="1"/>
        <end position="356"/>
    </location>
</feature>
<feature type="transmembrane region" description="Helical" evidence="2">
    <location>
        <begin position="206"/>
        <end position="228"/>
    </location>
</feature>
<feature type="transmembrane region" description="Helical" evidence="2">
    <location>
        <begin position="249"/>
        <end position="271"/>
    </location>
</feature>
<feature type="repeat" description="ANK">
    <location>
        <begin position="58"/>
        <end position="90"/>
    </location>
</feature>
<feature type="glycosylation site" description="N-linked (GlcNAc...) asparagine; by host" evidence="2">
    <location>
        <position position="125"/>
    </location>
</feature>
<feature type="glycosylation site" description="N-linked (GlcNAc...) asparagine; by host" evidence="2">
    <location>
        <position position="352"/>
    </location>
</feature>
<organismHost>
    <name type="scientific">Ornithodoros</name>
    <name type="common">relapsing fever ticks</name>
    <dbReference type="NCBI Taxonomy" id="6937"/>
</organismHost>
<organismHost>
    <name type="scientific">Phacochoerus aethiopicus</name>
    <name type="common">Warthog</name>
    <dbReference type="NCBI Taxonomy" id="85517"/>
</organismHost>
<organismHost>
    <name type="scientific">Phacochoerus africanus</name>
    <name type="common">Warthog</name>
    <dbReference type="NCBI Taxonomy" id="41426"/>
</organismHost>
<organismHost>
    <name type="scientific">Potamochoerus larvatus</name>
    <name type="common">Bushpig</name>
    <dbReference type="NCBI Taxonomy" id="273792"/>
</organismHost>
<organismHost>
    <name type="scientific">Sus scrofa</name>
    <name type="common">Pig</name>
    <dbReference type="NCBI Taxonomy" id="9823"/>
</organismHost>
<gene>
    <name type="ordered locus">Ken-033</name>
</gene>
<protein>
    <recommendedName>
        <fullName>Protein MGF 360-10L</fullName>
    </recommendedName>
</protein>
<comment type="function">
    <text evidence="1">Plays a role in virus cell tropism, and may be required for efficient virus replication in macrophages.</text>
</comment>
<comment type="subcellular location">
    <subcellularLocation>
        <location evidence="3">Host membrane</location>
        <topology evidence="3">Multi-pass membrane protein</topology>
    </subcellularLocation>
</comment>
<comment type="similarity">
    <text evidence="3">Belongs to the asfivirus MGF 360 family.</text>
</comment>
<name>36010_ASFK5</name>
<organism>
    <name type="scientific">African swine fever virus (isolate Pig/Kenya/KEN-50/1950)</name>
    <name type="common">ASFV</name>
    <dbReference type="NCBI Taxonomy" id="561445"/>
    <lineage>
        <taxon>Viruses</taxon>
        <taxon>Varidnaviria</taxon>
        <taxon>Bamfordvirae</taxon>
        <taxon>Nucleocytoviricota</taxon>
        <taxon>Pokkesviricetes</taxon>
        <taxon>Asfuvirales</taxon>
        <taxon>Asfarviridae</taxon>
        <taxon>Asfivirus</taxon>
        <taxon>African swine fever virus</taxon>
    </lineage>
</organism>
<dbReference type="EMBL" id="AY261360">
    <property type="status" value="NOT_ANNOTATED_CDS"/>
    <property type="molecule type" value="Genomic_DNA"/>
</dbReference>
<dbReference type="SMR" id="P0C9P4"/>
<dbReference type="Proteomes" id="UP000000861">
    <property type="component" value="Segment"/>
</dbReference>
<dbReference type="GO" id="GO:0033644">
    <property type="term" value="C:host cell membrane"/>
    <property type="evidence" value="ECO:0007669"/>
    <property type="project" value="UniProtKB-SubCell"/>
</dbReference>
<dbReference type="GO" id="GO:0016020">
    <property type="term" value="C:membrane"/>
    <property type="evidence" value="ECO:0007669"/>
    <property type="project" value="UniProtKB-KW"/>
</dbReference>
<dbReference type="GO" id="GO:0042330">
    <property type="term" value="P:taxis"/>
    <property type="evidence" value="ECO:0007669"/>
    <property type="project" value="InterPro"/>
</dbReference>
<dbReference type="InterPro" id="IPR002110">
    <property type="entry name" value="Ankyrin_rpt"/>
</dbReference>
<dbReference type="InterPro" id="IPR036770">
    <property type="entry name" value="Ankyrin_rpt-contain_sf"/>
</dbReference>
<dbReference type="InterPro" id="IPR002595">
    <property type="entry name" value="ASFV_MGF360"/>
</dbReference>
<dbReference type="Pfam" id="PF00023">
    <property type="entry name" value="Ank"/>
    <property type="match status" value="1"/>
</dbReference>
<dbReference type="Pfam" id="PF01671">
    <property type="entry name" value="ASFV_360"/>
    <property type="match status" value="1"/>
</dbReference>
<dbReference type="SUPFAM" id="SSF48403">
    <property type="entry name" value="Ankyrin repeat"/>
    <property type="match status" value="1"/>
</dbReference>
<dbReference type="PROSITE" id="PS50297">
    <property type="entry name" value="ANK_REP_REGION"/>
    <property type="match status" value="1"/>
</dbReference>
<dbReference type="PROSITE" id="PS50088">
    <property type="entry name" value="ANK_REPEAT"/>
    <property type="match status" value="1"/>
</dbReference>
<keyword id="KW-0040">ANK repeat</keyword>
<keyword id="KW-0325">Glycoprotein</keyword>
<keyword id="KW-1043">Host membrane</keyword>
<keyword id="KW-0472">Membrane</keyword>
<keyword id="KW-0812">Transmembrane</keyword>
<keyword id="KW-1133">Transmembrane helix</keyword>
<evidence type="ECO:0000250" key="1"/>
<evidence type="ECO:0000255" key="2"/>
<evidence type="ECO:0000305" key="3"/>
<sequence>MFPSLQSFAKKILASQHVLPEDYYHILKRCGLWWYKAPISLDCKHMLIRLPYFADGLDLNTALMIAAKENNYQLIKLFTEWGANINYGYICANTQPTREFCWELGANYRLDKKKVMHMFFKFIENKTSQYIILCHKLFNENPFPTYVIIREIKSSLYWRLRRLVEDEDLLRDVSDDDMLTLYCFMVALQNDLREAVSYFYQHFKHLNTWWLICALCFNKLFDLHYLYEQEKIRIDINEMMRIACTKDNNFLTMYYCFILGADINMAMLAAIQFFNMDNLFFCIDLGANAFEEAKALAEQRDYYLISHRLSLDIYHPDPSLFTLKEANPKKIYHLLNNYKSKSMSAYLDYHINDTTS</sequence>
<accession>P0C9P4</accession>